<organismHost>
    <name type="scientific">Aedes vexans</name>
    <name type="common">Inland floodwater mosquito</name>
    <name type="synonym">Culex vexans</name>
    <dbReference type="NCBI Taxonomy" id="7163"/>
</organismHost>
<organismHost>
    <name type="scientific">Culex territans</name>
    <dbReference type="NCBI Taxonomy" id="42431"/>
</organismHost>
<organismHost>
    <name type="scientific">Culiseta annulata</name>
    <dbReference type="NCBI Taxonomy" id="332058"/>
</organismHost>
<organismHost>
    <name type="scientific">Ochlerotatus sollicitans</name>
    <name type="common">eastern saltmarsh mosquito</name>
    <dbReference type="NCBI Taxonomy" id="310513"/>
</organismHost>
<organismHost>
    <name type="scientific">Ochlerotatus taeniorhynchus</name>
    <name type="common">Black salt marsh mosquito</name>
    <name type="synonym">Aedes taeniorhynchus</name>
    <dbReference type="NCBI Taxonomy" id="329105"/>
</organismHost>
<organismHost>
    <name type="scientific">Psorophora ferox</name>
    <dbReference type="NCBI Taxonomy" id="7183"/>
</organismHost>
<proteinExistence type="inferred from homology"/>
<dbReference type="EMBL" id="DQ643392">
    <property type="protein sequence ID" value="ABF82046.1"/>
    <property type="molecule type" value="Genomic_DNA"/>
</dbReference>
<dbReference type="RefSeq" id="YP_654588.1">
    <property type="nucleotide sequence ID" value="NC_008187.1"/>
</dbReference>
<dbReference type="KEGG" id="vg:4156265"/>
<dbReference type="OrthoDB" id="1424at10239"/>
<dbReference type="Proteomes" id="UP000001358">
    <property type="component" value="Genome"/>
</dbReference>
<dbReference type="InterPro" id="IPR043920">
    <property type="entry name" value="DUF5757"/>
</dbReference>
<dbReference type="Pfam" id="PF19061">
    <property type="entry name" value="DUF5757"/>
    <property type="match status" value="1"/>
</dbReference>
<evidence type="ECO:0000305" key="1"/>
<reference key="1">
    <citation type="journal article" date="2006" name="J. Virol.">
        <title>Genome of invertebrate iridescent virus type 3 (mosquito iridescent virus).</title>
        <authorList>
            <person name="Delhon G."/>
            <person name="Tulman E.R."/>
            <person name="Afonso C.L."/>
            <person name="Lu Z."/>
            <person name="Becnel J.J."/>
            <person name="Moser B.A."/>
            <person name="Kutish G.F."/>
            <person name="Rock D.L."/>
        </authorList>
    </citation>
    <scope>NUCLEOTIDE SEQUENCE [LARGE SCALE GENOMIC DNA]</scope>
</reference>
<feature type="chain" id="PRO_0000377779" description="Uncharacterized protein 016R">
    <location>
        <begin position="1"/>
        <end position="1139"/>
    </location>
</feature>
<comment type="similarity">
    <text evidence="1">Belongs to the IIV-6 295L family.</text>
</comment>
<name>VF295_IIV3</name>
<protein>
    <recommendedName>
        <fullName>Uncharacterized protein 016R</fullName>
    </recommendedName>
</protein>
<keyword id="KW-1185">Reference proteome</keyword>
<gene>
    <name type="ORF">IIV3-016R</name>
</gene>
<organism>
    <name type="scientific">Invertebrate iridescent virus 3</name>
    <name type="common">IIV-3</name>
    <name type="synonym">Mosquito iridescent virus</name>
    <dbReference type="NCBI Taxonomy" id="345201"/>
    <lineage>
        <taxon>Viruses</taxon>
        <taxon>Varidnaviria</taxon>
        <taxon>Bamfordvirae</taxon>
        <taxon>Nucleocytoviricota</taxon>
        <taxon>Megaviricetes</taxon>
        <taxon>Pimascovirales</taxon>
        <taxon>Iridoviridae</taxon>
        <taxon>Betairidovirinae</taxon>
        <taxon>Chloriridovirus</taxon>
    </lineage>
</organism>
<accession>Q197E4</accession>
<sequence length="1139" mass="131766">MFTVNKKPVVYSTRDGAEVLKGKISLVLKTLPSLFVLPPTPIQDGSDYTITPMIFVENGQLRLGQPQVPFSDQLELIKDEPNQLEVDFLKKLYIISKIQSTINDFEMQPDMGKNFALFELETEFGSVDETVWYNRLFDVQKFQQMVEENAAEVTLESRTTDLWAGVTPSFTPTAFVTNKINLETEIPNLRQESELMVFDTIRVNATVVACFYQDLIKYNQDFNPWIKDYLAQDKLLTKKLRASDIIRLMIAGTTPRKKYKMINVYVYPETISFTVEMLLNFDSTNGADNLKKLIKTIIVDMGKEDAYDQRVEKEYYYGSYSAPINVPIFVVKDLLTNDSNVYNIAYINESALINTRRSNLNLFLKNSSKDLKQHVGVSLFERPDTVGTFVRLKKIRGGAELQTTIDTSMGVVNKLLQYSVGKVAQVFNYYQTYINIVANLDPTVDLNREKENLLKVQAPEIFLPNYTRLCNKPPVIIEGEPQPEDGTILKFPIYGEAEPRYYKCPYPNYPHPGLRRNTTLGNRDTFPYVPCCYQRPQSMNKNYNTYYNQAVYEQRINSGEIGKTLKILAPKRIGELPPRINKLLSYSTKLKFYRYGFKTSLYSVLDVLNTATGSAATIEAVRRELSTRVELCKGEISSLQTGEIAEKIMDPATYVNPRLFKRALEDYYNLSIILFSKDQDDFSVYANKFLKFICPLRKRVVFMIEHEQAQHVELVLDEETLGHVNKQGSRPILTWDRNDFPVKKLFALYKDRFTHTLYDIGAKRFVSIHNLLMESSLTGTALEGLKRNTFHVYPWETISPNGKIVKSVQPLNQYTDSYGQTRLVEFRWKELRFVSEFQPLPCLAIAQVPEADPNHYTKPLEYFIQVNDKLTEEERATIREAFAWCNLYRTPLVSDADYRSPYYEFRRVKKLAQYILWAACHAYAQTYQTRPLSVMEWIDQDTRVDPNFSYSRVTISPLFNLDQFTVDSKFIFNSVQLQERVMFNLRLISTVNLKVYAANVYHAFYQDVTNFTVPYPAQLALSKTEYYQRTREPLIVQVLSDENVPYLRAGTLYVLENLFGIYSGNLCLFELSLEKLFEKSEQLFQQAVPPNTRVNIVLFNQGVPEYYVLGQNAPELDVIILNINNLWFYGLLRPKLTDM</sequence>